<name>RBFA_KLEP7</name>
<sequence length="133" mass="15096">MAKEFGRPQRVAQEMQKEIAIILQREIKDPRLGMMTTVSGVEMSRDLAYAKVYVTFLNDKDEAAVKAGIKALQEASGFIRSLLGKAMRLRIVPELTFFYDNSLVEGMRMSNLVTSVVKHDDERRVNPDDSKED</sequence>
<proteinExistence type="inferred from homology"/>
<protein>
    <recommendedName>
        <fullName evidence="1">Ribosome-binding factor A</fullName>
    </recommendedName>
</protein>
<organism>
    <name type="scientific">Klebsiella pneumoniae subsp. pneumoniae (strain ATCC 700721 / MGH 78578)</name>
    <dbReference type="NCBI Taxonomy" id="272620"/>
    <lineage>
        <taxon>Bacteria</taxon>
        <taxon>Pseudomonadati</taxon>
        <taxon>Pseudomonadota</taxon>
        <taxon>Gammaproteobacteria</taxon>
        <taxon>Enterobacterales</taxon>
        <taxon>Enterobacteriaceae</taxon>
        <taxon>Klebsiella/Raoultella group</taxon>
        <taxon>Klebsiella</taxon>
        <taxon>Klebsiella pneumoniae complex</taxon>
    </lineage>
</organism>
<reference key="1">
    <citation type="submission" date="2006-09" db="EMBL/GenBank/DDBJ databases">
        <authorList>
            <consortium name="The Klebsiella pneumonia Genome Sequencing Project"/>
            <person name="McClelland M."/>
            <person name="Sanderson E.K."/>
            <person name="Spieth J."/>
            <person name="Clifton W.S."/>
            <person name="Latreille P."/>
            <person name="Sabo A."/>
            <person name="Pepin K."/>
            <person name="Bhonagiri V."/>
            <person name="Porwollik S."/>
            <person name="Ali J."/>
            <person name="Wilson R.K."/>
        </authorList>
    </citation>
    <scope>NUCLEOTIDE SEQUENCE [LARGE SCALE GENOMIC DNA]</scope>
    <source>
        <strain>ATCC 700721 / MGH 78578</strain>
    </source>
</reference>
<feature type="chain" id="PRO_1000000123" description="Ribosome-binding factor A">
    <location>
        <begin position="1"/>
        <end position="133"/>
    </location>
</feature>
<keyword id="KW-0963">Cytoplasm</keyword>
<keyword id="KW-0690">Ribosome biogenesis</keyword>
<dbReference type="EMBL" id="CP000647">
    <property type="protein sequence ID" value="ABR78970.1"/>
    <property type="molecule type" value="Genomic_DNA"/>
</dbReference>
<dbReference type="RefSeq" id="WP_002918248.1">
    <property type="nucleotide sequence ID" value="NC_009648.1"/>
</dbReference>
<dbReference type="BMRB" id="A6TEI6"/>
<dbReference type="SMR" id="A6TEI6"/>
<dbReference type="STRING" id="272620.KPN_03575"/>
<dbReference type="jPOST" id="A6TEI6"/>
<dbReference type="PaxDb" id="272620-KPN_03575"/>
<dbReference type="EnsemblBacteria" id="ABR78970">
    <property type="protein sequence ID" value="ABR78970"/>
    <property type="gene ID" value="KPN_03575"/>
</dbReference>
<dbReference type="GeneID" id="93313980"/>
<dbReference type="KEGG" id="kpn:KPN_03575"/>
<dbReference type="HOGENOM" id="CLU_089475_5_0_6"/>
<dbReference type="Proteomes" id="UP000000265">
    <property type="component" value="Chromosome"/>
</dbReference>
<dbReference type="GO" id="GO:0005829">
    <property type="term" value="C:cytosol"/>
    <property type="evidence" value="ECO:0007669"/>
    <property type="project" value="TreeGrafter"/>
</dbReference>
<dbReference type="GO" id="GO:0043024">
    <property type="term" value="F:ribosomal small subunit binding"/>
    <property type="evidence" value="ECO:0007669"/>
    <property type="project" value="TreeGrafter"/>
</dbReference>
<dbReference type="GO" id="GO:0030490">
    <property type="term" value="P:maturation of SSU-rRNA"/>
    <property type="evidence" value="ECO:0007669"/>
    <property type="project" value="UniProtKB-UniRule"/>
</dbReference>
<dbReference type="FunFam" id="3.30.300.20:FF:000007">
    <property type="entry name" value="Ribosome-binding factor A"/>
    <property type="match status" value="1"/>
</dbReference>
<dbReference type="Gene3D" id="3.30.300.20">
    <property type="match status" value="1"/>
</dbReference>
<dbReference type="HAMAP" id="MF_00003">
    <property type="entry name" value="RbfA"/>
    <property type="match status" value="1"/>
</dbReference>
<dbReference type="InterPro" id="IPR015946">
    <property type="entry name" value="KH_dom-like_a/b"/>
</dbReference>
<dbReference type="InterPro" id="IPR000238">
    <property type="entry name" value="RbfA"/>
</dbReference>
<dbReference type="InterPro" id="IPR023799">
    <property type="entry name" value="RbfA_dom_sf"/>
</dbReference>
<dbReference type="InterPro" id="IPR020053">
    <property type="entry name" value="Ribosome-bd_factorA_CS"/>
</dbReference>
<dbReference type="NCBIfam" id="TIGR00082">
    <property type="entry name" value="rbfA"/>
    <property type="match status" value="1"/>
</dbReference>
<dbReference type="PANTHER" id="PTHR33515">
    <property type="entry name" value="RIBOSOME-BINDING FACTOR A, CHLOROPLASTIC-RELATED"/>
    <property type="match status" value="1"/>
</dbReference>
<dbReference type="PANTHER" id="PTHR33515:SF1">
    <property type="entry name" value="RIBOSOME-BINDING FACTOR A, CHLOROPLASTIC-RELATED"/>
    <property type="match status" value="1"/>
</dbReference>
<dbReference type="Pfam" id="PF02033">
    <property type="entry name" value="RBFA"/>
    <property type="match status" value="1"/>
</dbReference>
<dbReference type="SUPFAM" id="SSF89919">
    <property type="entry name" value="Ribosome-binding factor A, RbfA"/>
    <property type="match status" value="1"/>
</dbReference>
<dbReference type="PROSITE" id="PS01319">
    <property type="entry name" value="RBFA"/>
    <property type="match status" value="1"/>
</dbReference>
<accession>A6TEI6</accession>
<comment type="function">
    <text evidence="1">One of several proteins that assist in the late maturation steps of the functional core of the 30S ribosomal subunit. Associates with free 30S ribosomal subunits (but not with 30S subunits that are part of 70S ribosomes or polysomes). Required for efficient processing of 16S rRNA. May interact with the 5'-terminal helix region of 16S rRNA.</text>
</comment>
<comment type="subunit">
    <text evidence="1">Monomer. Binds 30S ribosomal subunits, but not 50S ribosomal subunits or 70S ribosomes.</text>
</comment>
<comment type="subcellular location">
    <subcellularLocation>
        <location evidence="1">Cytoplasm</location>
    </subcellularLocation>
</comment>
<comment type="similarity">
    <text evidence="1">Belongs to the RbfA family.</text>
</comment>
<gene>
    <name evidence="1" type="primary">rbfA</name>
    <name type="ordered locus">KPN78578_35460</name>
    <name type="ORF">KPN_03575</name>
</gene>
<evidence type="ECO:0000255" key="1">
    <source>
        <dbReference type="HAMAP-Rule" id="MF_00003"/>
    </source>
</evidence>